<feature type="signal peptide" evidence="1">
    <location>
        <begin position="1"/>
        <end position="19"/>
    </location>
</feature>
<feature type="chain" id="PRO_5000270323" description="Small serum protein 4">
    <location>
        <begin position="20"/>
        <end position="81"/>
    </location>
</feature>
<feature type="disulfide bond" evidence="1">
    <location>
        <begin position="21"/>
        <end position="74"/>
    </location>
</feature>
<feature type="disulfide bond" evidence="1">
    <location>
        <begin position="41"/>
        <end position="66"/>
    </location>
</feature>
<feature type="disulfide bond" evidence="1">
    <location>
        <begin position="64"/>
        <end position="73"/>
    </location>
</feature>
<sequence>MKVFFILIIFSFTLATCQGHCIGSIPLPEMEDGEDVPLRTCVDTHDEKKHLIVSTWKTANSFSCECRQDGMWCCKEYVAVA</sequence>
<reference key="1">
    <citation type="submission" date="2007-09" db="EMBL/GenBank/DDBJ databases">
        <title>Accelerated evolution of small serum proteins, PSP94 family proteins from venomous snake (Trimeresurus flavoviridis).</title>
        <authorList>
            <person name="Aoki N."/>
            <person name="Matsuo H."/>
            <person name="Deshimaru M."/>
            <person name="Terada S."/>
        </authorList>
    </citation>
    <scope>NUCLEOTIDE SEQUENCE [MRNA]</scope>
    <source>
        <tissue>Liver</tissue>
    </source>
</reference>
<keyword id="KW-1015">Disulfide bond</keyword>
<keyword id="KW-0964">Secreted</keyword>
<keyword id="KW-0732">Signal</keyword>
<name>MSMB4_PROFL</name>
<dbReference type="EMBL" id="AB360909">
    <property type="protein sequence ID" value="BAF80054.1"/>
    <property type="molecule type" value="mRNA"/>
</dbReference>
<dbReference type="SMR" id="A7VN16"/>
<dbReference type="GO" id="GO:0005576">
    <property type="term" value="C:extracellular region"/>
    <property type="evidence" value="ECO:0007669"/>
    <property type="project" value="UniProtKB-SubCell"/>
</dbReference>
<dbReference type="Gene3D" id="2.10.70.10">
    <property type="entry name" value="Complement Module, domain 1"/>
    <property type="match status" value="1"/>
</dbReference>
<dbReference type="InterPro" id="IPR008735">
    <property type="entry name" value="PSP94"/>
</dbReference>
<dbReference type="Pfam" id="PF05825">
    <property type="entry name" value="PSP94"/>
    <property type="match status" value="1"/>
</dbReference>
<accession>A7VN16</accession>
<comment type="function">
    <text evidence="1">Shows an slight inhibitory effect toward the metalloproteinase brevilysin H6, but does not inhibit the metalloproteinases thermolysin, HR1A and HR1B.</text>
</comment>
<comment type="subcellular location">
    <subcellularLocation>
        <location>Secreted</location>
    </subcellularLocation>
</comment>
<comment type="similarity">
    <text evidence="2">Belongs to the beta-microseminoprotein family.</text>
</comment>
<organism>
    <name type="scientific">Protobothrops flavoviridis</name>
    <name type="common">Habu</name>
    <name type="synonym">Trimeresurus flavoviridis</name>
    <dbReference type="NCBI Taxonomy" id="88087"/>
    <lineage>
        <taxon>Eukaryota</taxon>
        <taxon>Metazoa</taxon>
        <taxon>Chordata</taxon>
        <taxon>Craniata</taxon>
        <taxon>Vertebrata</taxon>
        <taxon>Euteleostomi</taxon>
        <taxon>Lepidosauria</taxon>
        <taxon>Squamata</taxon>
        <taxon>Bifurcata</taxon>
        <taxon>Unidentata</taxon>
        <taxon>Episquamata</taxon>
        <taxon>Toxicofera</taxon>
        <taxon>Serpentes</taxon>
        <taxon>Colubroidea</taxon>
        <taxon>Viperidae</taxon>
        <taxon>Crotalinae</taxon>
        <taxon>Protobothrops</taxon>
    </lineage>
</organism>
<evidence type="ECO:0000250" key="1"/>
<evidence type="ECO:0000305" key="2"/>
<protein>
    <recommendedName>
        <fullName>Small serum protein 4</fullName>
        <shortName>SSP-4</shortName>
    </recommendedName>
</protein>
<proteinExistence type="inferred from homology"/>